<accession>Q49UL9</accession>
<comment type="function">
    <text evidence="1">Component of the sulfite reductase complex that catalyzes the 6-electron reduction of sulfite to sulfide. This is one of several activities required for the biosynthesis of L-cysteine from sulfate.</text>
</comment>
<comment type="catalytic activity">
    <reaction evidence="1">
        <text>hydrogen sulfide + 3 NADP(+) + 3 H2O = sulfite + 3 NADPH + 4 H(+)</text>
        <dbReference type="Rhea" id="RHEA:13801"/>
        <dbReference type="ChEBI" id="CHEBI:15377"/>
        <dbReference type="ChEBI" id="CHEBI:15378"/>
        <dbReference type="ChEBI" id="CHEBI:17359"/>
        <dbReference type="ChEBI" id="CHEBI:29919"/>
        <dbReference type="ChEBI" id="CHEBI:57783"/>
        <dbReference type="ChEBI" id="CHEBI:58349"/>
        <dbReference type="EC" id="1.8.1.2"/>
    </reaction>
</comment>
<comment type="cofactor">
    <cofactor evidence="1">
        <name>siroheme</name>
        <dbReference type="ChEBI" id="CHEBI:60052"/>
    </cofactor>
    <text evidence="1">Binds 1 siroheme per subunit.</text>
</comment>
<comment type="cofactor">
    <cofactor evidence="1">
        <name>[4Fe-4S] cluster</name>
        <dbReference type="ChEBI" id="CHEBI:49883"/>
    </cofactor>
    <text evidence="1">Binds 1 [4Fe-4S] cluster per subunit.</text>
</comment>
<comment type="pathway">
    <text evidence="1">Sulfur metabolism; hydrogen sulfide biosynthesis; hydrogen sulfide from sulfite (NADPH route): step 1/1.</text>
</comment>
<comment type="subunit">
    <text evidence="1">Alpha(8)-beta(8). The alpha component is a flavoprotein, the beta component is a hemoprotein.</text>
</comment>
<comment type="similarity">
    <text evidence="1">Belongs to the nitrite and sulfite reductase 4Fe-4S domain family.</text>
</comment>
<gene>
    <name evidence="1" type="primary">cysI</name>
    <name type="ordered locus">SSP2407</name>
</gene>
<name>CYSI_STAS1</name>
<evidence type="ECO:0000255" key="1">
    <source>
        <dbReference type="HAMAP-Rule" id="MF_01540"/>
    </source>
</evidence>
<feature type="chain" id="PRO_0000388524" description="Sulfite reductase [NADPH] hemoprotein beta-component">
    <location>
        <begin position="1"/>
        <end position="569"/>
    </location>
</feature>
<feature type="binding site" evidence="1">
    <location>
        <position position="434"/>
    </location>
    <ligand>
        <name>[4Fe-4S] cluster</name>
        <dbReference type="ChEBI" id="CHEBI:49883"/>
    </ligand>
</feature>
<feature type="binding site" evidence="1">
    <location>
        <position position="440"/>
    </location>
    <ligand>
        <name>[4Fe-4S] cluster</name>
        <dbReference type="ChEBI" id="CHEBI:49883"/>
    </ligand>
</feature>
<feature type="binding site" evidence="1">
    <location>
        <position position="479"/>
    </location>
    <ligand>
        <name>[4Fe-4S] cluster</name>
        <dbReference type="ChEBI" id="CHEBI:49883"/>
    </ligand>
</feature>
<feature type="binding site" evidence="1">
    <location>
        <position position="483"/>
    </location>
    <ligand>
        <name>[4Fe-4S] cluster</name>
        <dbReference type="ChEBI" id="CHEBI:49883"/>
    </ligand>
</feature>
<feature type="binding site" description="axial binding residue" evidence="1">
    <location>
        <position position="483"/>
    </location>
    <ligand>
        <name>siroheme</name>
        <dbReference type="ChEBI" id="CHEBI:60052"/>
    </ligand>
    <ligandPart>
        <name>Fe</name>
        <dbReference type="ChEBI" id="CHEBI:18248"/>
    </ligandPart>
</feature>
<sequence length="569" mass="64278">MAETKVNFSDKLDEMERIKAHSDYLRGSIVQGLADRVTGAIAEEDTKLLKFHGSYMQDDRDIRDERRRQKLEPAYSFMIRVRAPGGASTAEQWIAMDDIANTYANGTIKLTTRQAFQFHGILKRNLKQTMKDINQSLLDTLAACGDVNRNVMCNPNPYQSDVHSEINQIASAISRHLSPKTQAYHEIWLDGEKVLDTSDEEPEPIYGKTYLPRKFKIGIAVPPSNDIDVYSQDIGLIAILENEQLVGFNVAVGGGMGMKHGNTATYPQVGRLIGYIPKEEVVDVCEKILTVQRDYGNREERTNARFKYTVDRLGVDWIRNEINNRLGWQLENKRPYHFEHNGDRYGWTEGSGKWHYTLFVQNGRVKDTEDYKLKTALRTIAEVHTGDFRLTPNQNLVIANVAAHKKNEIEKIITDFGITDGQHYTGLRRNSMACVAFPTCGLAMAESERYLPSLITKIEDLLDEAGLKEEEITIRMTGCPNGCARPALAEVAFIGKGPGKYNMYLGGGFIGDRLNKIYKENIGEAEILESLRPILLQYAKERTEGEHFGDFVVRAGIVEEVRDGQTFHS</sequence>
<keyword id="KW-0004">4Fe-4S</keyword>
<keyword id="KW-0028">Amino-acid biosynthesis</keyword>
<keyword id="KW-0198">Cysteine biosynthesis</keyword>
<keyword id="KW-0349">Heme</keyword>
<keyword id="KW-0408">Iron</keyword>
<keyword id="KW-0411">Iron-sulfur</keyword>
<keyword id="KW-0479">Metal-binding</keyword>
<keyword id="KW-0521">NADP</keyword>
<keyword id="KW-0560">Oxidoreductase</keyword>
<keyword id="KW-1185">Reference proteome</keyword>
<proteinExistence type="inferred from homology"/>
<organism>
    <name type="scientific">Staphylococcus saprophyticus subsp. saprophyticus (strain ATCC 15305 / DSM 20229 / NCIMB 8711 / NCTC 7292 / S-41)</name>
    <dbReference type="NCBI Taxonomy" id="342451"/>
    <lineage>
        <taxon>Bacteria</taxon>
        <taxon>Bacillati</taxon>
        <taxon>Bacillota</taxon>
        <taxon>Bacilli</taxon>
        <taxon>Bacillales</taxon>
        <taxon>Staphylococcaceae</taxon>
        <taxon>Staphylococcus</taxon>
    </lineage>
</organism>
<dbReference type="EC" id="1.8.1.2" evidence="1"/>
<dbReference type="EMBL" id="AP008934">
    <property type="protein sequence ID" value="BAE19552.1"/>
    <property type="molecule type" value="Genomic_DNA"/>
</dbReference>
<dbReference type="RefSeq" id="WP_011303998.1">
    <property type="nucleotide sequence ID" value="NZ_MTGA01000035.1"/>
</dbReference>
<dbReference type="SMR" id="Q49UL9"/>
<dbReference type="GeneID" id="3617311"/>
<dbReference type="KEGG" id="ssp:SSP2407"/>
<dbReference type="PATRIC" id="fig|342451.11.peg.2392"/>
<dbReference type="eggNOG" id="COG0155">
    <property type="taxonomic scope" value="Bacteria"/>
</dbReference>
<dbReference type="HOGENOM" id="CLU_001975_3_2_9"/>
<dbReference type="OrthoDB" id="9803707at2"/>
<dbReference type="UniPathway" id="UPA00140">
    <property type="reaction ID" value="UER00207"/>
</dbReference>
<dbReference type="Proteomes" id="UP000006371">
    <property type="component" value="Chromosome"/>
</dbReference>
<dbReference type="GO" id="GO:0009337">
    <property type="term" value="C:sulfite reductase complex (NADPH)"/>
    <property type="evidence" value="ECO:0007669"/>
    <property type="project" value="InterPro"/>
</dbReference>
<dbReference type="GO" id="GO:0051539">
    <property type="term" value="F:4 iron, 4 sulfur cluster binding"/>
    <property type="evidence" value="ECO:0007669"/>
    <property type="project" value="UniProtKB-KW"/>
</dbReference>
<dbReference type="GO" id="GO:0020037">
    <property type="term" value="F:heme binding"/>
    <property type="evidence" value="ECO:0007669"/>
    <property type="project" value="InterPro"/>
</dbReference>
<dbReference type="GO" id="GO:0046872">
    <property type="term" value="F:metal ion binding"/>
    <property type="evidence" value="ECO:0007669"/>
    <property type="project" value="UniProtKB-KW"/>
</dbReference>
<dbReference type="GO" id="GO:0050661">
    <property type="term" value="F:NADP binding"/>
    <property type="evidence" value="ECO:0007669"/>
    <property type="project" value="InterPro"/>
</dbReference>
<dbReference type="GO" id="GO:0050311">
    <property type="term" value="F:sulfite reductase (ferredoxin) activity"/>
    <property type="evidence" value="ECO:0007669"/>
    <property type="project" value="TreeGrafter"/>
</dbReference>
<dbReference type="GO" id="GO:0004783">
    <property type="term" value="F:sulfite reductase (NADPH) activity"/>
    <property type="evidence" value="ECO:0007669"/>
    <property type="project" value="UniProtKB-UniRule"/>
</dbReference>
<dbReference type="GO" id="GO:0019344">
    <property type="term" value="P:cysteine biosynthetic process"/>
    <property type="evidence" value="ECO:0007669"/>
    <property type="project" value="UniProtKB-KW"/>
</dbReference>
<dbReference type="GO" id="GO:0070814">
    <property type="term" value="P:hydrogen sulfide biosynthetic process"/>
    <property type="evidence" value="ECO:0007669"/>
    <property type="project" value="UniProtKB-UniRule"/>
</dbReference>
<dbReference type="GO" id="GO:0000103">
    <property type="term" value="P:sulfate assimilation"/>
    <property type="evidence" value="ECO:0007669"/>
    <property type="project" value="UniProtKB-UniRule"/>
</dbReference>
<dbReference type="FunFam" id="3.30.413.10:FF:000003">
    <property type="entry name" value="Sulfite reductase [NADPH] hemoprotein beta-component"/>
    <property type="match status" value="1"/>
</dbReference>
<dbReference type="FunFam" id="3.30.413.10:FF:000004">
    <property type="entry name" value="Sulfite reductase [NADPH] hemoprotein beta-component"/>
    <property type="match status" value="1"/>
</dbReference>
<dbReference type="Gene3D" id="3.30.413.10">
    <property type="entry name" value="Sulfite Reductase Hemoprotein, domain 1"/>
    <property type="match status" value="2"/>
</dbReference>
<dbReference type="HAMAP" id="MF_01540">
    <property type="entry name" value="CysI"/>
    <property type="match status" value="1"/>
</dbReference>
<dbReference type="InterPro" id="IPR011786">
    <property type="entry name" value="CysI"/>
</dbReference>
<dbReference type="InterPro" id="IPR005117">
    <property type="entry name" value="NiRdtase/SiRdtase_haem-b_fer"/>
</dbReference>
<dbReference type="InterPro" id="IPR036136">
    <property type="entry name" value="Nit/Sulf_reduc_fer-like_dom_sf"/>
</dbReference>
<dbReference type="InterPro" id="IPR006067">
    <property type="entry name" value="NO2/SO3_Rdtase_4Fe4S_dom"/>
</dbReference>
<dbReference type="InterPro" id="IPR045169">
    <property type="entry name" value="NO2/SO3_Rdtase_4Fe4S_prot"/>
</dbReference>
<dbReference type="InterPro" id="IPR045854">
    <property type="entry name" value="NO2/SO3_Rdtase_4Fe4S_sf"/>
</dbReference>
<dbReference type="InterPro" id="IPR006066">
    <property type="entry name" value="NO2/SO3_Rdtase_FeS/sirohaem_BS"/>
</dbReference>
<dbReference type="NCBIfam" id="TIGR02041">
    <property type="entry name" value="CysI"/>
    <property type="match status" value="1"/>
</dbReference>
<dbReference type="NCBIfam" id="NF010029">
    <property type="entry name" value="PRK13504.1"/>
    <property type="match status" value="1"/>
</dbReference>
<dbReference type="PANTHER" id="PTHR11493:SF47">
    <property type="entry name" value="SULFITE REDUCTASE [NADPH] SUBUNIT BETA"/>
    <property type="match status" value="1"/>
</dbReference>
<dbReference type="PANTHER" id="PTHR11493">
    <property type="entry name" value="SULFITE REDUCTASE [NADPH] SUBUNIT BETA-RELATED"/>
    <property type="match status" value="1"/>
</dbReference>
<dbReference type="Pfam" id="PF01077">
    <property type="entry name" value="NIR_SIR"/>
    <property type="match status" value="1"/>
</dbReference>
<dbReference type="Pfam" id="PF03460">
    <property type="entry name" value="NIR_SIR_ferr"/>
    <property type="match status" value="2"/>
</dbReference>
<dbReference type="PRINTS" id="PR00397">
    <property type="entry name" value="SIROHAEM"/>
</dbReference>
<dbReference type="SUPFAM" id="SSF56014">
    <property type="entry name" value="Nitrite and sulphite reductase 4Fe-4S domain-like"/>
    <property type="match status" value="2"/>
</dbReference>
<dbReference type="SUPFAM" id="SSF55124">
    <property type="entry name" value="Nitrite/Sulfite reductase N-terminal domain-like"/>
    <property type="match status" value="2"/>
</dbReference>
<dbReference type="PROSITE" id="PS00365">
    <property type="entry name" value="NIR_SIR"/>
    <property type="match status" value="1"/>
</dbReference>
<protein>
    <recommendedName>
        <fullName evidence="1">Sulfite reductase [NADPH] hemoprotein beta-component</fullName>
        <shortName evidence="1">SiR-HP</shortName>
        <shortName evidence="1">SiRHP</shortName>
        <ecNumber evidence="1">1.8.1.2</ecNumber>
    </recommendedName>
</protein>
<reference key="1">
    <citation type="journal article" date="2005" name="Proc. Natl. Acad. Sci. U.S.A.">
        <title>Whole genome sequence of Staphylococcus saprophyticus reveals the pathogenesis of uncomplicated urinary tract infection.</title>
        <authorList>
            <person name="Kuroda M."/>
            <person name="Yamashita A."/>
            <person name="Hirakawa H."/>
            <person name="Kumano M."/>
            <person name="Morikawa K."/>
            <person name="Higashide M."/>
            <person name="Maruyama A."/>
            <person name="Inose Y."/>
            <person name="Matoba K."/>
            <person name="Toh H."/>
            <person name="Kuhara S."/>
            <person name="Hattori M."/>
            <person name="Ohta T."/>
        </authorList>
    </citation>
    <scope>NUCLEOTIDE SEQUENCE [LARGE SCALE GENOMIC DNA]</scope>
    <source>
        <strain>ATCC 15305 / DSM 20229 / NCIMB 8711 / NCTC 7292 / S-41</strain>
    </source>
</reference>